<organism>
    <name type="scientific">Myxococcus xanthus (strain DK1622)</name>
    <dbReference type="NCBI Taxonomy" id="246197"/>
    <lineage>
        <taxon>Bacteria</taxon>
        <taxon>Pseudomonadati</taxon>
        <taxon>Myxococcota</taxon>
        <taxon>Myxococcia</taxon>
        <taxon>Myxococcales</taxon>
        <taxon>Cystobacterineae</taxon>
        <taxon>Myxococcaceae</taxon>
        <taxon>Myxococcus</taxon>
    </lineage>
</organism>
<keyword id="KW-0450">Lipoyl</keyword>
<keyword id="KW-1185">Reference proteome</keyword>
<proteinExistence type="inferred from homology"/>
<gene>
    <name evidence="1" type="primary">gcvH</name>
    <name type="ordered locus">MXAN_3041</name>
</gene>
<evidence type="ECO:0000255" key="1">
    <source>
        <dbReference type="HAMAP-Rule" id="MF_00272"/>
    </source>
</evidence>
<evidence type="ECO:0000255" key="2">
    <source>
        <dbReference type="PROSITE-ProRule" id="PRU01066"/>
    </source>
</evidence>
<sequence length="129" mass="13778">MADNIPGDLKYTREHEWARVQGTSVVVGVTQHAQESLGDVVYVELPKVGSTVTEGKQFGVIESTKAVSELYSPLTGKVVKVNDGLSDNPSTVNTDPYGAGWIVEIEPSDPKQVDGLMDAAAYTALLQNS</sequence>
<comment type="function">
    <text evidence="1">The glycine cleavage system catalyzes the degradation of glycine. The H protein shuttles the methylamine group of glycine from the P protein to the T protein.</text>
</comment>
<comment type="cofactor">
    <cofactor evidence="1">
        <name>(R)-lipoate</name>
        <dbReference type="ChEBI" id="CHEBI:83088"/>
    </cofactor>
    <text evidence="1">Binds 1 lipoyl cofactor covalently.</text>
</comment>
<comment type="subunit">
    <text evidence="1">The glycine cleavage system is composed of four proteins: P, T, L and H.</text>
</comment>
<comment type="similarity">
    <text evidence="1">Belongs to the GcvH family.</text>
</comment>
<dbReference type="EMBL" id="CP000113">
    <property type="protein sequence ID" value="ABF90620.1"/>
    <property type="molecule type" value="Genomic_DNA"/>
</dbReference>
<dbReference type="RefSeq" id="WP_011553097.1">
    <property type="nucleotide sequence ID" value="NC_008095.1"/>
</dbReference>
<dbReference type="SMR" id="Q1D7X3"/>
<dbReference type="STRING" id="246197.MXAN_3041"/>
<dbReference type="EnsemblBacteria" id="ABF90620">
    <property type="protein sequence ID" value="ABF90620"/>
    <property type="gene ID" value="MXAN_3041"/>
</dbReference>
<dbReference type="GeneID" id="41360403"/>
<dbReference type="KEGG" id="mxa:MXAN_3041"/>
<dbReference type="eggNOG" id="COG0509">
    <property type="taxonomic scope" value="Bacteria"/>
</dbReference>
<dbReference type="HOGENOM" id="CLU_097408_2_2_7"/>
<dbReference type="OrthoDB" id="9796712at2"/>
<dbReference type="Proteomes" id="UP000002402">
    <property type="component" value="Chromosome"/>
</dbReference>
<dbReference type="GO" id="GO:0005829">
    <property type="term" value="C:cytosol"/>
    <property type="evidence" value="ECO:0007669"/>
    <property type="project" value="TreeGrafter"/>
</dbReference>
<dbReference type="GO" id="GO:0005960">
    <property type="term" value="C:glycine cleavage complex"/>
    <property type="evidence" value="ECO:0007669"/>
    <property type="project" value="InterPro"/>
</dbReference>
<dbReference type="GO" id="GO:0019464">
    <property type="term" value="P:glycine decarboxylation via glycine cleavage system"/>
    <property type="evidence" value="ECO:0007669"/>
    <property type="project" value="UniProtKB-UniRule"/>
</dbReference>
<dbReference type="CDD" id="cd06848">
    <property type="entry name" value="GCS_H"/>
    <property type="match status" value="1"/>
</dbReference>
<dbReference type="Gene3D" id="2.40.50.100">
    <property type="match status" value="1"/>
</dbReference>
<dbReference type="HAMAP" id="MF_00272">
    <property type="entry name" value="GcvH"/>
    <property type="match status" value="1"/>
</dbReference>
<dbReference type="InterPro" id="IPR003016">
    <property type="entry name" value="2-oxoA_DH_lipoyl-BS"/>
</dbReference>
<dbReference type="InterPro" id="IPR000089">
    <property type="entry name" value="Biotin_lipoyl"/>
</dbReference>
<dbReference type="InterPro" id="IPR002930">
    <property type="entry name" value="GCV_H"/>
</dbReference>
<dbReference type="InterPro" id="IPR033753">
    <property type="entry name" value="GCV_H/Fam206"/>
</dbReference>
<dbReference type="InterPro" id="IPR017453">
    <property type="entry name" value="GCV_H_sub"/>
</dbReference>
<dbReference type="InterPro" id="IPR011053">
    <property type="entry name" value="Single_hybrid_motif"/>
</dbReference>
<dbReference type="NCBIfam" id="TIGR00527">
    <property type="entry name" value="gcvH"/>
    <property type="match status" value="1"/>
</dbReference>
<dbReference type="NCBIfam" id="NF002270">
    <property type="entry name" value="PRK01202.1"/>
    <property type="match status" value="1"/>
</dbReference>
<dbReference type="PANTHER" id="PTHR11715">
    <property type="entry name" value="GLYCINE CLEAVAGE SYSTEM H PROTEIN"/>
    <property type="match status" value="1"/>
</dbReference>
<dbReference type="PANTHER" id="PTHR11715:SF3">
    <property type="entry name" value="GLYCINE CLEAVAGE SYSTEM H PROTEIN-RELATED"/>
    <property type="match status" value="1"/>
</dbReference>
<dbReference type="Pfam" id="PF01597">
    <property type="entry name" value="GCV_H"/>
    <property type="match status" value="1"/>
</dbReference>
<dbReference type="SUPFAM" id="SSF51230">
    <property type="entry name" value="Single hybrid motif"/>
    <property type="match status" value="1"/>
</dbReference>
<dbReference type="PROSITE" id="PS50968">
    <property type="entry name" value="BIOTINYL_LIPOYL"/>
    <property type="match status" value="1"/>
</dbReference>
<dbReference type="PROSITE" id="PS00189">
    <property type="entry name" value="LIPOYL"/>
    <property type="match status" value="1"/>
</dbReference>
<feature type="chain" id="PRO_1000022198" description="Glycine cleavage system H protein">
    <location>
        <begin position="1"/>
        <end position="129"/>
    </location>
</feature>
<feature type="domain" description="Lipoyl-binding" evidence="2">
    <location>
        <begin position="24"/>
        <end position="106"/>
    </location>
</feature>
<feature type="modified residue" description="N6-lipoyllysine" evidence="1">
    <location>
        <position position="65"/>
    </location>
</feature>
<reference key="1">
    <citation type="journal article" date="2006" name="Proc. Natl. Acad. Sci. U.S.A.">
        <title>Evolution of sensory complexity recorded in a myxobacterial genome.</title>
        <authorList>
            <person name="Goldman B.S."/>
            <person name="Nierman W.C."/>
            <person name="Kaiser D."/>
            <person name="Slater S.C."/>
            <person name="Durkin A.S."/>
            <person name="Eisen J.A."/>
            <person name="Ronning C.M."/>
            <person name="Barbazuk W.B."/>
            <person name="Blanchard M."/>
            <person name="Field C."/>
            <person name="Halling C."/>
            <person name="Hinkle G."/>
            <person name="Iartchuk O."/>
            <person name="Kim H.S."/>
            <person name="Mackenzie C."/>
            <person name="Madupu R."/>
            <person name="Miller N."/>
            <person name="Shvartsbeyn A."/>
            <person name="Sullivan S.A."/>
            <person name="Vaudin M."/>
            <person name="Wiegand R."/>
            <person name="Kaplan H.B."/>
        </authorList>
    </citation>
    <scope>NUCLEOTIDE SEQUENCE [LARGE SCALE GENOMIC DNA]</scope>
    <source>
        <strain>DK1622</strain>
    </source>
</reference>
<accession>Q1D7X3</accession>
<name>GCSH_MYXXD</name>
<protein>
    <recommendedName>
        <fullName evidence="1">Glycine cleavage system H protein</fullName>
    </recommendedName>
</protein>